<name>Y1825_MYCTO</name>
<comment type="subcellular location">
    <subcellularLocation>
        <location evidence="3">Cell membrane</location>
        <topology evidence="3">Multi-pass membrane protein</topology>
    </subcellularLocation>
</comment>
<comment type="similarity">
    <text evidence="3">Belongs to the UPF0749 family.</text>
</comment>
<evidence type="ECO:0000255" key="1"/>
<evidence type="ECO:0000256" key="2">
    <source>
        <dbReference type="SAM" id="MobiDB-lite"/>
    </source>
</evidence>
<evidence type="ECO:0000305" key="3"/>
<keyword id="KW-1003">Cell membrane</keyword>
<keyword id="KW-0472">Membrane</keyword>
<keyword id="KW-1185">Reference proteome</keyword>
<keyword id="KW-0732">Signal</keyword>
<keyword id="KW-0812">Transmembrane</keyword>
<keyword id="KW-1133">Transmembrane helix</keyword>
<gene>
    <name type="ordered locus">MT1873</name>
</gene>
<accession>P9WFG2</accession>
<accession>L0T9D2</accession>
<accession>P64895</accession>
<accession>Q50608</accession>
<protein>
    <recommendedName>
        <fullName>UPF0749 protein MT1873</fullName>
    </recommendedName>
</protein>
<reference key="1">
    <citation type="journal article" date="2002" name="J. Bacteriol.">
        <title>Whole-genome comparison of Mycobacterium tuberculosis clinical and laboratory strains.</title>
        <authorList>
            <person name="Fleischmann R.D."/>
            <person name="Alland D."/>
            <person name="Eisen J.A."/>
            <person name="Carpenter L."/>
            <person name="White O."/>
            <person name="Peterson J.D."/>
            <person name="DeBoy R.T."/>
            <person name="Dodson R.J."/>
            <person name="Gwinn M.L."/>
            <person name="Haft D.H."/>
            <person name="Hickey E.K."/>
            <person name="Kolonay J.F."/>
            <person name="Nelson W.C."/>
            <person name="Umayam L.A."/>
            <person name="Ermolaeva M.D."/>
            <person name="Salzberg S.L."/>
            <person name="Delcher A."/>
            <person name="Utterback T.R."/>
            <person name="Weidman J.F."/>
            <person name="Khouri H.M."/>
            <person name="Gill J."/>
            <person name="Mikula A."/>
            <person name="Bishai W."/>
            <person name="Jacobs W.R. Jr."/>
            <person name="Venter J.C."/>
            <person name="Fraser C.M."/>
        </authorList>
    </citation>
    <scope>NUCLEOTIDE SEQUENCE [LARGE SCALE GENOMIC DNA]</scope>
    <source>
        <strain>CDC 1551 / Oshkosh</strain>
    </source>
</reference>
<proteinExistence type="inferred from homology"/>
<organism>
    <name type="scientific">Mycobacterium tuberculosis (strain CDC 1551 / Oshkosh)</name>
    <dbReference type="NCBI Taxonomy" id="83331"/>
    <lineage>
        <taxon>Bacteria</taxon>
        <taxon>Bacillati</taxon>
        <taxon>Actinomycetota</taxon>
        <taxon>Actinomycetes</taxon>
        <taxon>Mycobacteriales</taxon>
        <taxon>Mycobacteriaceae</taxon>
        <taxon>Mycobacterium</taxon>
        <taxon>Mycobacterium tuberculosis complex</taxon>
    </lineage>
</organism>
<dbReference type="EMBL" id="AE000516">
    <property type="protein sequence ID" value="AAK46146.1"/>
    <property type="molecule type" value="Genomic_DNA"/>
</dbReference>
<dbReference type="PIR" id="B70721">
    <property type="entry name" value="B70721"/>
</dbReference>
<dbReference type="RefSeq" id="WP_003899038.1">
    <property type="nucleotide sequence ID" value="NZ_KK341227.1"/>
</dbReference>
<dbReference type="SMR" id="P9WFG2"/>
<dbReference type="KEGG" id="mtc:MT1873"/>
<dbReference type="PATRIC" id="fig|83331.31.peg.2017"/>
<dbReference type="HOGENOM" id="CLU_040273_0_2_11"/>
<dbReference type="Proteomes" id="UP000001020">
    <property type="component" value="Chromosome"/>
</dbReference>
<dbReference type="GO" id="GO:0005886">
    <property type="term" value="C:plasma membrane"/>
    <property type="evidence" value="ECO:0007669"/>
    <property type="project" value="UniProtKB-SubCell"/>
</dbReference>
<dbReference type="FunFam" id="3.30.70.1880:FF:000002">
    <property type="entry name" value="UPF0749 protein Rv1825"/>
    <property type="match status" value="1"/>
</dbReference>
<dbReference type="Gene3D" id="3.30.70.1880">
    <property type="entry name" value="Protein of unknown function DUF881"/>
    <property type="match status" value="1"/>
</dbReference>
<dbReference type="InterPro" id="IPR010273">
    <property type="entry name" value="DUF881"/>
</dbReference>
<dbReference type="PANTHER" id="PTHR37313">
    <property type="entry name" value="UPF0749 PROTEIN RV1825"/>
    <property type="match status" value="1"/>
</dbReference>
<dbReference type="PANTHER" id="PTHR37313:SF2">
    <property type="entry name" value="UPF0749 PROTEIN YLXX"/>
    <property type="match status" value="1"/>
</dbReference>
<dbReference type="Pfam" id="PF05949">
    <property type="entry name" value="DUF881"/>
    <property type="match status" value="1"/>
</dbReference>
<sequence>MSENRPEPVAAETSAATTARHSQADAGAHDAVRRGRHELPADHPRSKVGPLRRTRLTEILRGGRSRLVFGTLAILLCLVLGVAIVTQVRQTDSGDSLETARPADLLVLLDSLRQREATLNAEVIDLQNTLNALQASGNTDQAALESAQARLAALSILVGAVGATGPGVMITIDDPGPGVAPEVMIDVINELRAAGAEAIQINDAHRSVRVGVDTWVVGVPGSLTVDTKVLSPPYSILAIGDPPTLAAAMNIPGGAQDGVKRVGGRMVVQQADRVDVTALRQPKQHQYAQPVK</sequence>
<feature type="signal peptide" evidence="1">
    <location>
        <begin position="1"/>
        <end position="28"/>
    </location>
</feature>
<feature type="chain" id="PRO_0000428544" description="UPF0749 protein MT1873">
    <location>
        <begin position="29"/>
        <end position="292"/>
    </location>
</feature>
<feature type="transmembrane region" description="Helical" evidence="1">
    <location>
        <begin position="68"/>
        <end position="88"/>
    </location>
</feature>
<feature type="transmembrane region" description="Helical" evidence="1">
    <location>
        <begin position="152"/>
        <end position="172"/>
    </location>
</feature>
<feature type="transmembrane region" description="Helical" evidence="1">
    <location>
        <begin position="229"/>
        <end position="249"/>
    </location>
</feature>
<feature type="region of interest" description="Disordered" evidence="2">
    <location>
        <begin position="1"/>
        <end position="30"/>
    </location>
</feature>